<feature type="chain" id="PRO_1000135122" description="1-(5-phosphoribosyl)-5-[(5-phosphoribosylamino)methylideneamino] imidazole-4-carboxamide isomerase">
    <location>
        <begin position="1"/>
        <end position="245"/>
    </location>
</feature>
<feature type="active site" description="Proton acceptor" evidence="1">
    <location>
        <position position="8"/>
    </location>
</feature>
<feature type="active site" description="Proton donor" evidence="1">
    <location>
        <position position="129"/>
    </location>
</feature>
<protein>
    <recommendedName>
        <fullName evidence="1">1-(5-phosphoribosyl)-5-[(5-phosphoribosylamino)methylideneamino] imidazole-4-carboxamide isomerase</fullName>
        <ecNumber evidence="1">5.3.1.16</ecNumber>
    </recommendedName>
    <alternativeName>
        <fullName evidence="1">Phosphoribosylformimino-5-aminoimidazole carboxamide ribotide isomerase</fullName>
    </alternativeName>
</protein>
<organism>
    <name type="scientific">Trichlorobacter lovleyi (strain ATCC BAA-1151 / DSM 17278 / SZ)</name>
    <name type="common">Geobacter lovleyi</name>
    <dbReference type="NCBI Taxonomy" id="398767"/>
    <lineage>
        <taxon>Bacteria</taxon>
        <taxon>Pseudomonadati</taxon>
        <taxon>Thermodesulfobacteriota</taxon>
        <taxon>Desulfuromonadia</taxon>
        <taxon>Geobacterales</taxon>
        <taxon>Geobacteraceae</taxon>
        <taxon>Trichlorobacter</taxon>
    </lineage>
</organism>
<keyword id="KW-0028">Amino-acid biosynthesis</keyword>
<keyword id="KW-0963">Cytoplasm</keyword>
<keyword id="KW-0368">Histidine biosynthesis</keyword>
<keyword id="KW-0413">Isomerase</keyword>
<keyword id="KW-1185">Reference proteome</keyword>
<sequence length="245" mass="25686">MIVIPAIDLKEGNCVRLEQGEMNRDTVFSDNPAEQALKWQEAGAELLHLVDLDGAFAGIPKNKAAIEAIIKAITIPAQLGGGIRDIATIEAYLSLGLSRVIIGTAAQRNPELVIEACQKFPGRIVVGIDAKNGMVAVQGWAELTDISAVDLAKKFEDCGVAAIIYTDISRDGMMGGPNLEATRALAEAISIPVIASGGVSSLKDIENLMAIEASGVTGAITGKAIYTGAINLREAIDLTKRGCQC</sequence>
<comment type="catalytic activity">
    <reaction evidence="1">
        <text>1-(5-phospho-beta-D-ribosyl)-5-[(5-phospho-beta-D-ribosylamino)methylideneamino]imidazole-4-carboxamide = 5-[(5-phospho-1-deoxy-D-ribulos-1-ylimino)methylamino]-1-(5-phospho-beta-D-ribosyl)imidazole-4-carboxamide</text>
        <dbReference type="Rhea" id="RHEA:15469"/>
        <dbReference type="ChEBI" id="CHEBI:58435"/>
        <dbReference type="ChEBI" id="CHEBI:58525"/>
        <dbReference type="EC" id="5.3.1.16"/>
    </reaction>
</comment>
<comment type="pathway">
    <text evidence="1">Amino-acid biosynthesis; L-histidine biosynthesis; L-histidine from 5-phospho-alpha-D-ribose 1-diphosphate: step 4/9.</text>
</comment>
<comment type="subcellular location">
    <subcellularLocation>
        <location evidence="1">Cytoplasm</location>
    </subcellularLocation>
</comment>
<comment type="similarity">
    <text evidence="1">Belongs to the HisA/HisF family.</text>
</comment>
<evidence type="ECO:0000255" key="1">
    <source>
        <dbReference type="HAMAP-Rule" id="MF_01014"/>
    </source>
</evidence>
<accession>B3E618</accession>
<proteinExistence type="inferred from homology"/>
<gene>
    <name evidence="1" type="primary">hisA</name>
    <name type="ordered locus">Glov_1019</name>
</gene>
<name>HIS4_TRIL1</name>
<dbReference type="EC" id="5.3.1.16" evidence="1"/>
<dbReference type="EMBL" id="CP001089">
    <property type="protein sequence ID" value="ACD94742.1"/>
    <property type="molecule type" value="Genomic_DNA"/>
</dbReference>
<dbReference type="RefSeq" id="WP_012469092.1">
    <property type="nucleotide sequence ID" value="NC_010814.1"/>
</dbReference>
<dbReference type="SMR" id="B3E618"/>
<dbReference type="STRING" id="398767.Glov_1019"/>
<dbReference type="KEGG" id="glo:Glov_1019"/>
<dbReference type="eggNOG" id="COG0106">
    <property type="taxonomic scope" value="Bacteria"/>
</dbReference>
<dbReference type="HOGENOM" id="CLU_048577_1_1_7"/>
<dbReference type="OrthoDB" id="9807749at2"/>
<dbReference type="UniPathway" id="UPA00031">
    <property type="reaction ID" value="UER00009"/>
</dbReference>
<dbReference type="Proteomes" id="UP000002420">
    <property type="component" value="Chromosome"/>
</dbReference>
<dbReference type="GO" id="GO:0005737">
    <property type="term" value="C:cytoplasm"/>
    <property type="evidence" value="ECO:0007669"/>
    <property type="project" value="UniProtKB-SubCell"/>
</dbReference>
<dbReference type="GO" id="GO:0003949">
    <property type="term" value="F:1-(5-phosphoribosyl)-5-[(5-phosphoribosylamino)methylideneamino]imidazole-4-carboxamide isomerase activity"/>
    <property type="evidence" value="ECO:0007669"/>
    <property type="project" value="UniProtKB-UniRule"/>
</dbReference>
<dbReference type="GO" id="GO:0000105">
    <property type="term" value="P:L-histidine biosynthetic process"/>
    <property type="evidence" value="ECO:0007669"/>
    <property type="project" value="UniProtKB-UniRule"/>
</dbReference>
<dbReference type="GO" id="GO:0000162">
    <property type="term" value="P:L-tryptophan biosynthetic process"/>
    <property type="evidence" value="ECO:0007669"/>
    <property type="project" value="TreeGrafter"/>
</dbReference>
<dbReference type="CDD" id="cd04732">
    <property type="entry name" value="HisA"/>
    <property type="match status" value="1"/>
</dbReference>
<dbReference type="FunFam" id="3.20.20.70:FF:000009">
    <property type="entry name" value="1-(5-phosphoribosyl)-5-[(5-phosphoribosylamino)methylideneamino] imidazole-4-carboxamide isomerase"/>
    <property type="match status" value="1"/>
</dbReference>
<dbReference type="Gene3D" id="3.20.20.70">
    <property type="entry name" value="Aldolase class I"/>
    <property type="match status" value="1"/>
</dbReference>
<dbReference type="HAMAP" id="MF_01014">
    <property type="entry name" value="HisA"/>
    <property type="match status" value="1"/>
</dbReference>
<dbReference type="InterPro" id="IPR013785">
    <property type="entry name" value="Aldolase_TIM"/>
</dbReference>
<dbReference type="InterPro" id="IPR006062">
    <property type="entry name" value="His_biosynth"/>
</dbReference>
<dbReference type="InterPro" id="IPR006063">
    <property type="entry name" value="HisA_bact_arch"/>
</dbReference>
<dbReference type="InterPro" id="IPR044524">
    <property type="entry name" value="Isoase_HisA-like"/>
</dbReference>
<dbReference type="InterPro" id="IPR023016">
    <property type="entry name" value="Isoase_HisA-like_bact"/>
</dbReference>
<dbReference type="InterPro" id="IPR011060">
    <property type="entry name" value="RibuloseP-bd_barrel"/>
</dbReference>
<dbReference type="NCBIfam" id="TIGR00007">
    <property type="entry name" value="1-(5-phosphoribosyl)-5-[(5-phosphoribosylamino)methylideneamino]imidazole-4-carboxamide isomerase"/>
    <property type="match status" value="1"/>
</dbReference>
<dbReference type="NCBIfam" id="NF010112">
    <property type="entry name" value="PRK13585.1"/>
    <property type="match status" value="1"/>
</dbReference>
<dbReference type="PANTHER" id="PTHR43090">
    <property type="entry name" value="1-(5-PHOSPHORIBOSYL)-5-[(5-PHOSPHORIBOSYLAMINO)METHYLIDENEAMINO] IMIDAZOLE-4-CARBOXAMIDE ISOMERASE"/>
    <property type="match status" value="1"/>
</dbReference>
<dbReference type="PANTHER" id="PTHR43090:SF2">
    <property type="entry name" value="1-(5-PHOSPHORIBOSYL)-5-[(5-PHOSPHORIBOSYLAMINO)METHYLIDENEAMINO] IMIDAZOLE-4-CARBOXAMIDE ISOMERASE"/>
    <property type="match status" value="1"/>
</dbReference>
<dbReference type="Pfam" id="PF00977">
    <property type="entry name" value="His_biosynth"/>
    <property type="match status" value="1"/>
</dbReference>
<dbReference type="SUPFAM" id="SSF51366">
    <property type="entry name" value="Ribulose-phoshate binding barrel"/>
    <property type="match status" value="1"/>
</dbReference>
<reference key="1">
    <citation type="submission" date="2008-05" db="EMBL/GenBank/DDBJ databases">
        <title>Complete sequence of chromosome of Geobacter lovleyi SZ.</title>
        <authorList>
            <consortium name="US DOE Joint Genome Institute"/>
            <person name="Lucas S."/>
            <person name="Copeland A."/>
            <person name="Lapidus A."/>
            <person name="Glavina del Rio T."/>
            <person name="Dalin E."/>
            <person name="Tice H."/>
            <person name="Bruce D."/>
            <person name="Goodwin L."/>
            <person name="Pitluck S."/>
            <person name="Chertkov O."/>
            <person name="Meincke L."/>
            <person name="Brettin T."/>
            <person name="Detter J.C."/>
            <person name="Han C."/>
            <person name="Tapia R."/>
            <person name="Kuske C.R."/>
            <person name="Schmutz J."/>
            <person name="Larimer F."/>
            <person name="Land M."/>
            <person name="Hauser L."/>
            <person name="Kyrpides N."/>
            <person name="Mikhailova N."/>
            <person name="Sung Y."/>
            <person name="Fletcher K.E."/>
            <person name="Ritalahti K.M."/>
            <person name="Loeffler F.E."/>
            <person name="Richardson P."/>
        </authorList>
    </citation>
    <scope>NUCLEOTIDE SEQUENCE [LARGE SCALE GENOMIC DNA]</scope>
    <source>
        <strain>ATCC BAA-1151 / DSM 17278 / SZ</strain>
    </source>
</reference>